<sequence length="175" mass="19543">MSRRGVTVWFTGLSGAGKTTLSCGVAQQLRAWGLPVEVLDGDLVRQHLTKGLGFSKVDREENIRRIGFVAEMLTRHGVIVLVSAISPYRAARQEVRRYIGSFIEVFVDAPLEVCERRDVKGLYRKARAGLIQHFTGIDDPYEPPEQPEVVCKTAEQSIPECIDLVIQSLKSRGYV</sequence>
<reference key="1">
    <citation type="journal article" date="2007" name="ISME J.">
        <title>Population level functional diversity in a microbial community revealed by comparative genomic and metagenomic analyses.</title>
        <authorList>
            <person name="Bhaya D."/>
            <person name="Grossman A.R."/>
            <person name="Steunou A.-S."/>
            <person name="Khuri N."/>
            <person name="Cohan F.M."/>
            <person name="Hamamura N."/>
            <person name="Melendrez M.C."/>
            <person name="Bateson M.M."/>
            <person name="Ward D.M."/>
            <person name="Heidelberg J.F."/>
        </authorList>
    </citation>
    <scope>NUCLEOTIDE SEQUENCE [LARGE SCALE GENOMIC DNA]</scope>
    <source>
        <strain>JA-2-3B'a(2-13)</strain>
    </source>
</reference>
<proteinExistence type="inferred from homology"/>
<comment type="function">
    <text evidence="1">Catalyzes the synthesis of activated sulfate.</text>
</comment>
<comment type="catalytic activity">
    <reaction evidence="1">
        <text>adenosine 5'-phosphosulfate + ATP = 3'-phosphoadenylyl sulfate + ADP + H(+)</text>
        <dbReference type="Rhea" id="RHEA:24152"/>
        <dbReference type="ChEBI" id="CHEBI:15378"/>
        <dbReference type="ChEBI" id="CHEBI:30616"/>
        <dbReference type="ChEBI" id="CHEBI:58243"/>
        <dbReference type="ChEBI" id="CHEBI:58339"/>
        <dbReference type="ChEBI" id="CHEBI:456216"/>
        <dbReference type="EC" id="2.7.1.25"/>
    </reaction>
</comment>
<comment type="pathway">
    <text evidence="1">Sulfur metabolism; hydrogen sulfide biosynthesis; sulfite from sulfate: step 2/3.</text>
</comment>
<comment type="similarity">
    <text evidence="1">Belongs to the APS kinase family.</text>
</comment>
<dbReference type="EC" id="2.7.1.25" evidence="1"/>
<dbReference type="EMBL" id="CP000240">
    <property type="protein sequence ID" value="ABD02384.1"/>
    <property type="molecule type" value="Genomic_DNA"/>
</dbReference>
<dbReference type="RefSeq" id="WP_011433032.1">
    <property type="nucleotide sequence ID" value="NC_007776.1"/>
</dbReference>
<dbReference type="SMR" id="Q2JLM3"/>
<dbReference type="STRING" id="321332.CYB_1417"/>
<dbReference type="KEGG" id="cyb:CYB_1417"/>
<dbReference type="eggNOG" id="COG0529">
    <property type="taxonomic scope" value="Bacteria"/>
</dbReference>
<dbReference type="HOGENOM" id="CLU_046932_2_1_3"/>
<dbReference type="OrthoDB" id="9804504at2"/>
<dbReference type="UniPathway" id="UPA00140">
    <property type="reaction ID" value="UER00205"/>
</dbReference>
<dbReference type="Proteomes" id="UP000001938">
    <property type="component" value="Chromosome"/>
</dbReference>
<dbReference type="GO" id="GO:0005737">
    <property type="term" value="C:cytoplasm"/>
    <property type="evidence" value="ECO:0007669"/>
    <property type="project" value="TreeGrafter"/>
</dbReference>
<dbReference type="GO" id="GO:0004020">
    <property type="term" value="F:adenylylsulfate kinase activity"/>
    <property type="evidence" value="ECO:0007669"/>
    <property type="project" value="UniProtKB-UniRule"/>
</dbReference>
<dbReference type="GO" id="GO:0005524">
    <property type="term" value="F:ATP binding"/>
    <property type="evidence" value="ECO:0007669"/>
    <property type="project" value="UniProtKB-UniRule"/>
</dbReference>
<dbReference type="GO" id="GO:0004781">
    <property type="term" value="F:sulfate adenylyltransferase (ATP) activity"/>
    <property type="evidence" value="ECO:0007669"/>
    <property type="project" value="TreeGrafter"/>
</dbReference>
<dbReference type="GO" id="GO:0070814">
    <property type="term" value="P:hydrogen sulfide biosynthetic process"/>
    <property type="evidence" value="ECO:0007669"/>
    <property type="project" value="UniProtKB-UniRule"/>
</dbReference>
<dbReference type="GO" id="GO:0010134">
    <property type="term" value="P:sulfate assimilation via adenylyl sulfate reduction"/>
    <property type="evidence" value="ECO:0007669"/>
    <property type="project" value="TreeGrafter"/>
</dbReference>
<dbReference type="GO" id="GO:0019379">
    <property type="term" value="P:sulfate assimilation, phosphoadenylyl sulfate reduction by phosphoadenylyl-sulfate reductase (thioredoxin)"/>
    <property type="evidence" value="ECO:0007669"/>
    <property type="project" value="TreeGrafter"/>
</dbReference>
<dbReference type="CDD" id="cd02027">
    <property type="entry name" value="APSK"/>
    <property type="match status" value="1"/>
</dbReference>
<dbReference type="FunFam" id="3.40.50.300:FF:000802">
    <property type="entry name" value="Sulfate adenylyltransferase"/>
    <property type="match status" value="1"/>
</dbReference>
<dbReference type="Gene3D" id="3.40.50.300">
    <property type="entry name" value="P-loop containing nucleotide triphosphate hydrolases"/>
    <property type="match status" value="1"/>
</dbReference>
<dbReference type="HAMAP" id="MF_00065">
    <property type="entry name" value="Adenylyl_sulf_kinase"/>
    <property type="match status" value="1"/>
</dbReference>
<dbReference type="InterPro" id="IPR002891">
    <property type="entry name" value="APS_kinase"/>
</dbReference>
<dbReference type="InterPro" id="IPR027417">
    <property type="entry name" value="P-loop_NTPase"/>
</dbReference>
<dbReference type="InterPro" id="IPR050512">
    <property type="entry name" value="Sulf_AdTrans/APS_kinase"/>
</dbReference>
<dbReference type="NCBIfam" id="TIGR00455">
    <property type="entry name" value="apsK"/>
    <property type="match status" value="1"/>
</dbReference>
<dbReference type="NCBIfam" id="NF002059">
    <property type="entry name" value="PRK00889.1"/>
    <property type="match status" value="1"/>
</dbReference>
<dbReference type="NCBIfam" id="NF003013">
    <property type="entry name" value="PRK03846.1"/>
    <property type="match status" value="1"/>
</dbReference>
<dbReference type="PANTHER" id="PTHR42700">
    <property type="entry name" value="SULFATE ADENYLYLTRANSFERASE"/>
    <property type="match status" value="1"/>
</dbReference>
<dbReference type="PANTHER" id="PTHR42700:SF1">
    <property type="entry name" value="SULFATE ADENYLYLTRANSFERASE"/>
    <property type="match status" value="1"/>
</dbReference>
<dbReference type="Pfam" id="PF01583">
    <property type="entry name" value="APS_kinase"/>
    <property type="match status" value="1"/>
</dbReference>
<dbReference type="SUPFAM" id="SSF52540">
    <property type="entry name" value="P-loop containing nucleoside triphosphate hydrolases"/>
    <property type="match status" value="1"/>
</dbReference>
<organism>
    <name type="scientific">Synechococcus sp. (strain JA-2-3B'a(2-13))</name>
    <name type="common">Cyanobacteria bacterium Yellowstone B-Prime</name>
    <dbReference type="NCBI Taxonomy" id="321332"/>
    <lineage>
        <taxon>Bacteria</taxon>
        <taxon>Bacillati</taxon>
        <taxon>Cyanobacteriota</taxon>
        <taxon>Cyanophyceae</taxon>
        <taxon>Synechococcales</taxon>
        <taxon>Synechococcaceae</taxon>
        <taxon>Synechococcus</taxon>
    </lineage>
</organism>
<name>CYSC_SYNJB</name>
<keyword id="KW-0067">ATP-binding</keyword>
<keyword id="KW-0418">Kinase</keyword>
<keyword id="KW-0547">Nucleotide-binding</keyword>
<keyword id="KW-0597">Phosphoprotein</keyword>
<keyword id="KW-1185">Reference proteome</keyword>
<keyword id="KW-0808">Transferase</keyword>
<protein>
    <recommendedName>
        <fullName evidence="1">Adenylyl-sulfate kinase</fullName>
        <ecNumber evidence="1">2.7.1.25</ecNumber>
    </recommendedName>
    <alternativeName>
        <fullName evidence="1">APS kinase</fullName>
    </alternativeName>
    <alternativeName>
        <fullName evidence="1">ATP adenosine-5'-phosphosulfate 3'-phosphotransferase</fullName>
    </alternativeName>
    <alternativeName>
        <fullName evidence="1">Adenosine-5'-phosphosulfate kinase</fullName>
    </alternativeName>
</protein>
<feature type="chain" id="PRO_1000057447" description="Adenylyl-sulfate kinase">
    <location>
        <begin position="1"/>
        <end position="175"/>
    </location>
</feature>
<feature type="active site" description="Phosphoserine intermediate" evidence="1">
    <location>
        <position position="86"/>
    </location>
</feature>
<feature type="binding site" evidence="1">
    <location>
        <begin position="12"/>
        <end position="19"/>
    </location>
    <ligand>
        <name>ATP</name>
        <dbReference type="ChEBI" id="CHEBI:30616"/>
    </ligand>
</feature>
<evidence type="ECO:0000255" key="1">
    <source>
        <dbReference type="HAMAP-Rule" id="MF_00065"/>
    </source>
</evidence>
<accession>Q2JLM3</accession>
<gene>
    <name evidence="1" type="primary">cysC</name>
    <name type="ordered locus">CYB_1417</name>
</gene>